<dbReference type="EMBL" id="BA000018">
    <property type="protein sequence ID" value="BAB41668.1"/>
    <property type="molecule type" value="Genomic_DNA"/>
</dbReference>
<dbReference type="PIR" id="A89814">
    <property type="entry name" value="A89814"/>
</dbReference>
<dbReference type="RefSeq" id="WP_000559159.1">
    <property type="nucleotide sequence ID" value="NC_002745.2"/>
</dbReference>
<dbReference type="SMR" id="Q99WC3"/>
<dbReference type="EnsemblBacteria" id="BAB41668">
    <property type="protein sequence ID" value="BAB41668"/>
    <property type="gene ID" value="BAB41668"/>
</dbReference>
<dbReference type="KEGG" id="sau:SA0438"/>
<dbReference type="HOGENOM" id="CLU_060739_1_0_9"/>
<dbReference type="GO" id="GO:0003677">
    <property type="term" value="F:DNA binding"/>
    <property type="evidence" value="ECO:0007669"/>
    <property type="project" value="UniProtKB-UniRule"/>
</dbReference>
<dbReference type="GO" id="GO:0008270">
    <property type="term" value="F:zinc ion binding"/>
    <property type="evidence" value="ECO:0007669"/>
    <property type="project" value="UniProtKB-KW"/>
</dbReference>
<dbReference type="GO" id="GO:0006310">
    <property type="term" value="P:DNA recombination"/>
    <property type="evidence" value="ECO:0007669"/>
    <property type="project" value="UniProtKB-UniRule"/>
</dbReference>
<dbReference type="GO" id="GO:0006281">
    <property type="term" value="P:DNA repair"/>
    <property type="evidence" value="ECO:0007669"/>
    <property type="project" value="UniProtKB-UniRule"/>
</dbReference>
<dbReference type="CDD" id="cd01025">
    <property type="entry name" value="TOPRIM_recR"/>
    <property type="match status" value="1"/>
</dbReference>
<dbReference type="Gene3D" id="3.30.60.80">
    <property type="match status" value="1"/>
</dbReference>
<dbReference type="Gene3D" id="3.40.1360.10">
    <property type="match status" value="1"/>
</dbReference>
<dbReference type="Gene3D" id="6.10.250.240">
    <property type="match status" value="1"/>
</dbReference>
<dbReference type="Gene3D" id="1.10.8.420">
    <property type="entry name" value="RecR Domain 1"/>
    <property type="match status" value="1"/>
</dbReference>
<dbReference type="HAMAP" id="MF_00017">
    <property type="entry name" value="RecR"/>
    <property type="match status" value="1"/>
</dbReference>
<dbReference type="InterPro" id="IPR000093">
    <property type="entry name" value="DNA_Rcmb_RecR"/>
</dbReference>
<dbReference type="InterPro" id="IPR003583">
    <property type="entry name" value="Hlx-hairpin-Hlx_DNA-bd_motif"/>
</dbReference>
<dbReference type="InterPro" id="IPR023627">
    <property type="entry name" value="Rcmb_RecR"/>
</dbReference>
<dbReference type="InterPro" id="IPR015967">
    <property type="entry name" value="Rcmb_RecR_Znf"/>
</dbReference>
<dbReference type="InterPro" id="IPR006171">
    <property type="entry name" value="TOPRIM_dom"/>
</dbReference>
<dbReference type="InterPro" id="IPR034137">
    <property type="entry name" value="TOPRIM_RecR"/>
</dbReference>
<dbReference type="NCBIfam" id="TIGR00615">
    <property type="entry name" value="recR"/>
    <property type="match status" value="1"/>
</dbReference>
<dbReference type="PANTHER" id="PTHR30446">
    <property type="entry name" value="RECOMBINATION PROTEIN RECR"/>
    <property type="match status" value="1"/>
</dbReference>
<dbReference type="PANTHER" id="PTHR30446:SF0">
    <property type="entry name" value="RECOMBINATION PROTEIN RECR"/>
    <property type="match status" value="1"/>
</dbReference>
<dbReference type="Pfam" id="PF21175">
    <property type="entry name" value="RecR_C"/>
    <property type="match status" value="1"/>
</dbReference>
<dbReference type="Pfam" id="PF21176">
    <property type="entry name" value="RecR_HhH"/>
    <property type="match status" value="1"/>
</dbReference>
<dbReference type="Pfam" id="PF02132">
    <property type="entry name" value="RecR_ZnF"/>
    <property type="match status" value="1"/>
</dbReference>
<dbReference type="Pfam" id="PF13662">
    <property type="entry name" value="Toprim_4"/>
    <property type="match status" value="1"/>
</dbReference>
<dbReference type="SMART" id="SM00278">
    <property type="entry name" value="HhH1"/>
    <property type="match status" value="1"/>
</dbReference>
<dbReference type="SMART" id="SM00493">
    <property type="entry name" value="TOPRIM"/>
    <property type="match status" value="1"/>
</dbReference>
<dbReference type="SUPFAM" id="SSF111304">
    <property type="entry name" value="Recombination protein RecR"/>
    <property type="match status" value="1"/>
</dbReference>
<dbReference type="PROSITE" id="PS01300">
    <property type="entry name" value="RECR"/>
    <property type="match status" value="1"/>
</dbReference>
<dbReference type="PROSITE" id="PS50880">
    <property type="entry name" value="TOPRIM"/>
    <property type="match status" value="1"/>
</dbReference>
<accession>Q99WC3</accession>
<reference key="1">
    <citation type="journal article" date="2001" name="Lancet">
        <title>Whole genome sequencing of meticillin-resistant Staphylococcus aureus.</title>
        <authorList>
            <person name="Kuroda M."/>
            <person name="Ohta T."/>
            <person name="Uchiyama I."/>
            <person name="Baba T."/>
            <person name="Yuzawa H."/>
            <person name="Kobayashi I."/>
            <person name="Cui L."/>
            <person name="Oguchi A."/>
            <person name="Aoki K."/>
            <person name="Nagai Y."/>
            <person name="Lian J.-Q."/>
            <person name="Ito T."/>
            <person name="Kanamori M."/>
            <person name="Matsumaru H."/>
            <person name="Maruyama A."/>
            <person name="Murakami H."/>
            <person name="Hosoyama A."/>
            <person name="Mizutani-Ui Y."/>
            <person name="Takahashi N.K."/>
            <person name="Sawano T."/>
            <person name="Inoue R."/>
            <person name="Kaito C."/>
            <person name="Sekimizu K."/>
            <person name="Hirakawa H."/>
            <person name="Kuhara S."/>
            <person name="Goto S."/>
            <person name="Yabuzaki J."/>
            <person name="Kanehisa M."/>
            <person name="Yamashita A."/>
            <person name="Oshima K."/>
            <person name="Furuya K."/>
            <person name="Yoshino C."/>
            <person name="Shiba T."/>
            <person name="Hattori M."/>
            <person name="Ogasawara N."/>
            <person name="Hayashi H."/>
            <person name="Hiramatsu K."/>
        </authorList>
    </citation>
    <scope>NUCLEOTIDE SEQUENCE [LARGE SCALE GENOMIC DNA]</scope>
    <source>
        <strain>N315</strain>
    </source>
</reference>
<keyword id="KW-0227">DNA damage</keyword>
<keyword id="KW-0233">DNA recombination</keyword>
<keyword id="KW-0234">DNA repair</keyword>
<keyword id="KW-0479">Metal-binding</keyword>
<keyword id="KW-0862">Zinc</keyword>
<keyword id="KW-0863">Zinc-finger</keyword>
<protein>
    <recommendedName>
        <fullName evidence="1">Recombination protein RecR</fullName>
    </recommendedName>
</protein>
<feature type="chain" id="PRO_0000190387" description="Recombination protein RecR">
    <location>
        <begin position="1"/>
        <end position="198"/>
    </location>
</feature>
<feature type="domain" description="Toprim" evidence="1">
    <location>
        <begin position="80"/>
        <end position="175"/>
    </location>
</feature>
<feature type="zinc finger region" description="C4-type" evidence="1">
    <location>
        <begin position="57"/>
        <end position="72"/>
    </location>
</feature>
<evidence type="ECO:0000255" key="1">
    <source>
        <dbReference type="HAMAP-Rule" id="MF_00017"/>
    </source>
</evidence>
<organism>
    <name type="scientific">Staphylococcus aureus (strain N315)</name>
    <dbReference type="NCBI Taxonomy" id="158879"/>
    <lineage>
        <taxon>Bacteria</taxon>
        <taxon>Bacillati</taxon>
        <taxon>Bacillota</taxon>
        <taxon>Bacilli</taxon>
        <taxon>Bacillales</taxon>
        <taxon>Staphylococcaceae</taxon>
        <taxon>Staphylococcus</taxon>
    </lineage>
</organism>
<comment type="function">
    <text evidence="1">May play a role in DNA repair. It seems to be involved in an RecBC-independent recombinational process of DNA repair. It may act with RecF and RecO.</text>
</comment>
<comment type="similarity">
    <text evidence="1">Belongs to the RecR family.</text>
</comment>
<sequence length="198" mass="22072">MHYPEPISKLIDSFMKLPGIGPKTAQRLAFHTLDMKEDDVVQFAKALVDVKRELTYCSVCGHITENDPCYICEDKQRDRSVICVVEDDKDVIAMEKMREYKGLYHVLHGSISPMDGIGPEDINIPSLIERLKSDEVSELILAMNPNLEGESTAMYISRLVKPIGIKVTRLAQGLSVGGDLEYADEVTLSKAIAGRTEM</sequence>
<name>RECR_STAAN</name>
<proteinExistence type="inferred from homology"/>
<gene>
    <name evidence="1" type="primary">recR</name>
    <name type="ordered locus">SA0438</name>
</gene>